<proteinExistence type="inferred from homology"/>
<keyword id="KW-0143">Chaperone</keyword>
<keyword id="KW-0963">Cytoplasm</keyword>
<keyword id="KW-0235">DNA replication</keyword>
<keyword id="KW-0479">Metal-binding</keyword>
<keyword id="KW-0677">Repeat</keyword>
<keyword id="KW-0346">Stress response</keyword>
<keyword id="KW-0862">Zinc</keyword>
<keyword id="KW-0863">Zinc-finger</keyword>
<organism>
    <name type="scientific">Shigella boydii serotype 4 (strain Sb227)</name>
    <dbReference type="NCBI Taxonomy" id="300268"/>
    <lineage>
        <taxon>Bacteria</taxon>
        <taxon>Pseudomonadati</taxon>
        <taxon>Pseudomonadota</taxon>
        <taxon>Gammaproteobacteria</taxon>
        <taxon>Enterobacterales</taxon>
        <taxon>Enterobacteriaceae</taxon>
        <taxon>Shigella</taxon>
    </lineage>
</organism>
<sequence>MAKQDYYEILGVSKTAEEREIKKAYKRLAMKYHPDRNQGDKEAEAKFKEIKEAYEVLTDSQKRAAYDQYGHAAFEQGGMGGGGFGGGADFSDIFGDVFGDIFGGGRGRQRAARGADLRYNMELTLEEAVRGVTKEIRIPTLEECDVCHGSGAKPGTQPQTCPTCHGSGQVQMRQGFFAVQQTCPHCQGRGTLIKDPCNKCHGHGRVERSKTLSVKIPAGVDTGDRIRLAGEGEAGQHGAPAGDLYVQVQVKQHPIFEREGNNLYCEVPINFAMAALGGEIEVPTLDGRVKLKVPGETQTGKLFRMRGKGVKSVRGGAQGDLLCRVVVETPVGLNEKQKQLLQELQESFGGPTGEHNSPRSKSFFDGVKKFFDDLTR</sequence>
<name>DNAJ_SHIBS</name>
<accession>Q326K6</accession>
<feature type="chain" id="PRO_1000085301" description="Chaperone protein DnaJ">
    <location>
        <begin position="1"/>
        <end position="376"/>
    </location>
</feature>
<feature type="domain" description="J" evidence="1">
    <location>
        <begin position="5"/>
        <end position="70"/>
    </location>
</feature>
<feature type="repeat" description="CXXCXGXG motif">
    <location>
        <begin position="144"/>
        <end position="151"/>
    </location>
</feature>
<feature type="repeat" description="CXXCXGXG motif">
    <location>
        <begin position="161"/>
        <end position="168"/>
    </location>
</feature>
<feature type="repeat" description="CXXCXGXG motif">
    <location>
        <begin position="183"/>
        <end position="190"/>
    </location>
</feature>
<feature type="repeat" description="CXXCXGXG motif">
    <location>
        <begin position="197"/>
        <end position="204"/>
    </location>
</feature>
<feature type="zinc finger region" description="CR-type" evidence="1">
    <location>
        <begin position="131"/>
        <end position="209"/>
    </location>
</feature>
<feature type="binding site" evidence="1">
    <location>
        <position position="144"/>
    </location>
    <ligand>
        <name>Zn(2+)</name>
        <dbReference type="ChEBI" id="CHEBI:29105"/>
        <label>1</label>
    </ligand>
</feature>
<feature type="binding site" evidence="1">
    <location>
        <position position="147"/>
    </location>
    <ligand>
        <name>Zn(2+)</name>
        <dbReference type="ChEBI" id="CHEBI:29105"/>
        <label>1</label>
    </ligand>
</feature>
<feature type="binding site" evidence="1">
    <location>
        <position position="161"/>
    </location>
    <ligand>
        <name>Zn(2+)</name>
        <dbReference type="ChEBI" id="CHEBI:29105"/>
        <label>2</label>
    </ligand>
</feature>
<feature type="binding site" evidence="1">
    <location>
        <position position="164"/>
    </location>
    <ligand>
        <name>Zn(2+)</name>
        <dbReference type="ChEBI" id="CHEBI:29105"/>
        <label>2</label>
    </ligand>
</feature>
<feature type="binding site" evidence="1">
    <location>
        <position position="183"/>
    </location>
    <ligand>
        <name>Zn(2+)</name>
        <dbReference type="ChEBI" id="CHEBI:29105"/>
        <label>2</label>
    </ligand>
</feature>
<feature type="binding site" evidence="1">
    <location>
        <position position="186"/>
    </location>
    <ligand>
        <name>Zn(2+)</name>
        <dbReference type="ChEBI" id="CHEBI:29105"/>
        <label>2</label>
    </ligand>
</feature>
<feature type="binding site" evidence="1">
    <location>
        <position position="197"/>
    </location>
    <ligand>
        <name>Zn(2+)</name>
        <dbReference type="ChEBI" id="CHEBI:29105"/>
        <label>1</label>
    </ligand>
</feature>
<feature type="binding site" evidence="1">
    <location>
        <position position="200"/>
    </location>
    <ligand>
        <name>Zn(2+)</name>
        <dbReference type="ChEBI" id="CHEBI:29105"/>
        <label>1</label>
    </ligand>
</feature>
<reference key="1">
    <citation type="journal article" date="2005" name="Nucleic Acids Res.">
        <title>Genome dynamics and diversity of Shigella species, the etiologic agents of bacillary dysentery.</title>
        <authorList>
            <person name="Yang F."/>
            <person name="Yang J."/>
            <person name="Zhang X."/>
            <person name="Chen L."/>
            <person name="Jiang Y."/>
            <person name="Yan Y."/>
            <person name="Tang X."/>
            <person name="Wang J."/>
            <person name="Xiong Z."/>
            <person name="Dong J."/>
            <person name="Xue Y."/>
            <person name="Zhu Y."/>
            <person name="Xu X."/>
            <person name="Sun L."/>
            <person name="Chen S."/>
            <person name="Nie H."/>
            <person name="Peng J."/>
            <person name="Xu J."/>
            <person name="Wang Y."/>
            <person name="Yuan Z."/>
            <person name="Wen Y."/>
            <person name="Yao Z."/>
            <person name="Shen Y."/>
            <person name="Qiang B."/>
            <person name="Hou Y."/>
            <person name="Yu J."/>
            <person name="Jin Q."/>
        </authorList>
    </citation>
    <scope>NUCLEOTIDE SEQUENCE [LARGE SCALE GENOMIC DNA]</scope>
    <source>
        <strain>Sb227</strain>
    </source>
</reference>
<comment type="function">
    <text evidence="1">Participates actively in the response to hyperosmotic and heat shock by preventing the aggregation of stress-denatured proteins and by disaggregating proteins, also in an autonomous, DnaK-independent fashion. Unfolded proteins bind initially to DnaJ; upon interaction with the DnaJ-bound protein, DnaK hydrolyzes its bound ATP, resulting in the formation of a stable complex. GrpE releases ADP from DnaK; ATP binding to DnaK triggers the release of the substrate protein, thus completing the reaction cycle. Several rounds of ATP-dependent interactions between DnaJ, DnaK and GrpE are required for fully efficient folding. Also involved, together with DnaK and GrpE, in the DNA replication of plasmids through activation of initiation proteins.</text>
</comment>
<comment type="cofactor">
    <cofactor evidence="1">
        <name>Zn(2+)</name>
        <dbReference type="ChEBI" id="CHEBI:29105"/>
    </cofactor>
    <text evidence="1">Binds 2 Zn(2+) ions per monomer.</text>
</comment>
<comment type="subunit">
    <text evidence="1">Homodimer.</text>
</comment>
<comment type="subcellular location">
    <subcellularLocation>
        <location evidence="1">Cytoplasm</location>
    </subcellularLocation>
</comment>
<comment type="domain">
    <text evidence="1">The J domain is necessary and sufficient to stimulate DnaK ATPase activity. Zinc center 1 plays an important role in the autonomous, DnaK-independent chaperone activity of DnaJ. Zinc center 2 is essential for interaction with DnaK and for DnaJ activity.</text>
</comment>
<comment type="similarity">
    <text evidence="1">Belongs to the DnaJ family.</text>
</comment>
<protein>
    <recommendedName>
        <fullName evidence="1">Chaperone protein DnaJ</fullName>
    </recommendedName>
</protein>
<gene>
    <name evidence="1" type="primary">dnaJ</name>
    <name type="ordered locus">SBO_0016</name>
</gene>
<dbReference type="EMBL" id="CP000036">
    <property type="protein sequence ID" value="ABB64752.1"/>
    <property type="molecule type" value="Genomic_DNA"/>
</dbReference>
<dbReference type="RefSeq" id="WP_001118467.1">
    <property type="nucleotide sequence ID" value="NC_007613.1"/>
</dbReference>
<dbReference type="SMR" id="Q326K6"/>
<dbReference type="KEGG" id="sbo:SBO_0016"/>
<dbReference type="HOGENOM" id="CLU_017633_0_7_6"/>
<dbReference type="Proteomes" id="UP000007067">
    <property type="component" value="Chromosome"/>
</dbReference>
<dbReference type="GO" id="GO:0005737">
    <property type="term" value="C:cytoplasm"/>
    <property type="evidence" value="ECO:0007669"/>
    <property type="project" value="UniProtKB-SubCell"/>
</dbReference>
<dbReference type="GO" id="GO:0005524">
    <property type="term" value="F:ATP binding"/>
    <property type="evidence" value="ECO:0007669"/>
    <property type="project" value="InterPro"/>
</dbReference>
<dbReference type="GO" id="GO:0031072">
    <property type="term" value="F:heat shock protein binding"/>
    <property type="evidence" value="ECO:0007669"/>
    <property type="project" value="InterPro"/>
</dbReference>
<dbReference type="GO" id="GO:0051082">
    <property type="term" value="F:unfolded protein binding"/>
    <property type="evidence" value="ECO:0007669"/>
    <property type="project" value="UniProtKB-UniRule"/>
</dbReference>
<dbReference type="GO" id="GO:0008270">
    <property type="term" value="F:zinc ion binding"/>
    <property type="evidence" value="ECO:0007669"/>
    <property type="project" value="UniProtKB-UniRule"/>
</dbReference>
<dbReference type="GO" id="GO:0051085">
    <property type="term" value="P:chaperone cofactor-dependent protein refolding"/>
    <property type="evidence" value="ECO:0007669"/>
    <property type="project" value="TreeGrafter"/>
</dbReference>
<dbReference type="GO" id="GO:0006260">
    <property type="term" value="P:DNA replication"/>
    <property type="evidence" value="ECO:0007669"/>
    <property type="project" value="UniProtKB-KW"/>
</dbReference>
<dbReference type="GO" id="GO:0042026">
    <property type="term" value="P:protein refolding"/>
    <property type="evidence" value="ECO:0007669"/>
    <property type="project" value="TreeGrafter"/>
</dbReference>
<dbReference type="GO" id="GO:0009408">
    <property type="term" value="P:response to heat"/>
    <property type="evidence" value="ECO:0007669"/>
    <property type="project" value="InterPro"/>
</dbReference>
<dbReference type="CDD" id="cd06257">
    <property type="entry name" value="DnaJ"/>
    <property type="match status" value="1"/>
</dbReference>
<dbReference type="CDD" id="cd10747">
    <property type="entry name" value="DnaJ_C"/>
    <property type="match status" value="1"/>
</dbReference>
<dbReference type="CDD" id="cd10719">
    <property type="entry name" value="DnaJ_zf"/>
    <property type="match status" value="1"/>
</dbReference>
<dbReference type="FunFam" id="1.10.287.110:FF:000003">
    <property type="entry name" value="Molecular chaperone DnaJ"/>
    <property type="match status" value="1"/>
</dbReference>
<dbReference type="FunFam" id="2.10.230.10:FF:000002">
    <property type="entry name" value="Molecular chaperone DnaJ"/>
    <property type="match status" value="1"/>
</dbReference>
<dbReference type="FunFam" id="2.60.260.20:FF:000004">
    <property type="entry name" value="Molecular chaperone DnaJ"/>
    <property type="match status" value="1"/>
</dbReference>
<dbReference type="Gene3D" id="1.10.287.110">
    <property type="entry name" value="DnaJ domain"/>
    <property type="match status" value="1"/>
</dbReference>
<dbReference type="Gene3D" id="2.10.230.10">
    <property type="entry name" value="Heat shock protein DnaJ, cysteine-rich domain"/>
    <property type="match status" value="1"/>
</dbReference>
<dbReference type="Gene3D" id="2.60.260.20">
    <property type="entry name" value="Urease metallochaperone UreE, N-terminal domain"/>
    <property type="match status" value="2"/>
</dbReference>
<dbReference type="HAMAP" id="MF_01152">
    <property type="entry name" value="DnaJ"/>
    <property type="match status" value="1"/>
</dbReference>
<dbReference type="InterPro" id="IPR012724">
    <property type="entry name" value="DnaJ"/>
</dbReference>
<dbReference type="InterPro" id="IPR002939">
    <property type="entry name" value="DnaJ_C"/>
</dbReference>
<dbReference type="InterPro" id="IPR001623">
    <property type="entry name" value="DnaJ_domain"/>
</dbReference>
<dbReference type="InterPro" id="IPR018253">
    <property type="entry name" value="DnaJ_domain_CS"/>
</dbReference>
<dbReference type="InterPro" id="IPR008971">
    <property type="entry name" value="HSP40/DnaJ_pept-bd"/>
</dbReference>
<dbReference type="InterPro" id="IPR001305">
    <property type="entry name" value="HSP_DnaJ_Cys-rich_dom"/>
</dbReference>
<dbReference type="InterPro" id="IPR036410">
    <property type="entry name" value="HSP_DnaJ_Cys-rich_dom_sf"/>
</dbReference>
<dbReference type="InterPro" id="IPR036869">
    <property type="entry name" value="J_dom_sf"/>
</dbReference>
<dbReference type="NCBIfam" id="TIGR02349">
    <property type="entry name" value="DnaJ_bact"/>
    <property type="match status" value="1"/>
</dbReference>
<dbReference type="NCBIfam" id="NF008035">
    <property type="entry name" value="PRK10767.1"/>
    <property type="match status" value="1"/>
</dbReference>
<dbReference type="PANTHER" id="PTHR43096:SF48">
    <property type="entry name" value="CHAPERONE PROTEIN DNAJ"/>
    <property type="match status" value="1"/>
</dbReference>
<dbReference type="PANTHER" id="PTHR43096">
    <property type="entry name" value="DNAJ HOMOLOG 1, MITOCHONDRIAL-RELATED"/>
    <property type="match status" value="1"/>
</dbReference>
<dbReference type="Pfam" id="PF00226">
    <property type="entry name" value="DnaJ"/>
    <property type="match status" value="1"/>
</dbReference>
<dbReference type="Pfam" id="PF01556">
    <property type="entry name" value="DnaJ_C"/>
    <property type="match status" value="1"/>
</dbReference>
<dbReference type="Pfam" id="PF00684">
    <property type="entry name" value="DnaJ_CXXCXGXG"/>
    <property type="match status" value="1"/>
</dbReference>
<dbReference type="PRINTS" id="PR00625">
    <property type="entry name" value="JDOMAIN"/>
</dbReference>
<dbReference type="SMART" id="SM00271">
    <property type="entry name" value="DnaJ"/>
    <property type="match status" value="1"/>
</dbReference>
<dbReference type="SUPFAM" id="SSF46565">
    <property type="entry name" value="Chaperone J-domain"/>
    <property type="match status" value="1"/>
</dbReference>
<dbReference type="SUPFAM" id="SSF57938">
    <property type="entry name" value="DnaJ/Hsp40 cysteine-rich domain"/>
    <property type="match status" value="1"/>
</dbReference>
<dbReference type="SUPFAM" id="SSF49493">
    <property type="entry name" value="HSP40/DnaJ peptide-binding domain"/>
    <property type="match status" value="2"/>
</dbReference>
<dbReference type="PROSITE" id="PS00636">
    <property type="entry name" value="DNAJ_1"/>
    <property type="match status" value="1"/>
</dbReference>
<dbReference type="PROSITE" id="PS50076">
    <property type="entry name" value="DNAJ_2"/>
    <property type="match status" value="1"/>
</dbReference>
<dbReference type="PROSITE" id="PS51188">
    <property type="entry name" value="ZF_CR"/>
    <property type="match status" value="1"/>
</dbReference>
<evidence type="ECO:0000255" key="1">
    <source>
        <dbReference type="HAMAP-Rule" id="MF_01152"/>
    </source>
</evidence>